<feature type="chain" id="PRO_0000132568" description="Small ribosomal subunit protein uS4c">
    <location>
        <begin position="1" status="less than"/>
        <end position="182" status="greater than"/>
    </location>
</feature>
<feature type="domain" description="S4 RNA-binding">
    <location>
        <begin position="82"/>
        <end position="143"/>
    </location>
</feature>
<feature type="region of interest" description="Disordered" evidence="2">
    <location>
        <begin position="8"/>
        <end position="36"/>
    </location>
</feature>
<feature type="non-terminal residue">
    <location>
        <position position="1"/>
    </location>
</feature>
<feature type="non-terminal residue">
    <location>
        <position position="182"/>
    </location>
</feature>
<keyword id="KW-0150">Chloroplast</keyword>
<keyword id="KW-0934">Plastid</keyword>
<keyword id="KW-0687">Ribonucleoprotein</keyword>
<keyword id="KW-0689">Ribosomal protein</keyword>
<keyword id="KW-0694">RNA-binding</keyword>
<keyword id="KW-0699">rRNA-binding</keyword>
<reference key="1">
    <citation type="journal article" date="1997" name="Plant Syst. Evol.">
        <title>Phylogenetic analysis of Iridaceae with parsimony and distance methods using the plastid gene rps4.</title>
        <authorList>
            <person name="Souza-Chies T.T."/>
            <person name="Bittar G."/>
            <person name="Nadot S."/>
            <person name="Carter L."/>
            <person name="Besin E."/>
            <person name="Lejeune B.P."/>
        </authorList>
    </citation>
    <scope>NUCLEOTIDE SEQUENCE [GENOMIC DNA]</scope>
</reference>
<accession>O20210</accession>
<protein>
    <recommendedName>
        <fullName evidence="3">Small ribosomal subunit protein uS4c</fullName>
    </recommendedName>
    <alternativeName>
        <fullName>30S ribosomal protein S4, chloroplastic</fullName>
    </alternativeName>
</protein>
<comment type="function">
    <text evidence="1">One of the primary rRNA binding proteins, it binds directly to 16S rRNA where it nucleates assembly of the body of the 30S subunit.</text>
</comment>
<comment type="function">
    <text evidence="1">With S5 and S12 plays an important role in translational accuracy.</text>
</comment>
<comment type="subunit">
    <text evidence="1">Part of the 30S ribosomal subunit. Contacts protein S5. The interaction surface between S4 and S5 is involved in control of translational fidelity (By similarity).</text>
</comment>
<comment type="subcellular location">
    <subcellularLocation>
        <location>Plastid</location>
        <location>Chloroplast</location>
    </subcellularLocation>
</comment>
<comment type="similarity">
    <text evidence="3">Belongs to the universal ribosomal protein uS4 family.</text>
</comment>
<organism>
    <name type="scientific">Dietes robinsoniana</name>
    <name type="common">Lord Howe wedding lily</name>
    <name type="synonym">Iris robinsoniana</name>
    <dbReference type="NCBI Taxonomy" id="58955"/>
    <lineage>
        <taxon>Eukaryota</taxon>
        <taxon>Viridiplantae</taxon>
        <taxon>Streptophyta</taxon>
        <taxon>Embryophyta</taxon>
        <taxon>Tracheophyta</taxon>
        <taxon>Spermatophyta</taxon>
        <taxon>Magnoliopsida</taxon>
        <taxon>Liliopsida</taxon>
        <taxon>Asparagales</taxon>
        <taxon>Iridaceae</taxon>
        <taxon>Iridoideae</taxon>
        <taxon>Irideae</taxon>
        <taxon>Dietes</taxon>
    </lineage>
</organism>
<geneLocation type="chloroplast"/>
<name>RR4_DIERO</name>
<dbReference type="EMBL" id="Z68239">
    <property type="protein sequence ID" value="CAA92537.1"/>
    <property type="molecule type" value="Genomic_DNA"/>
</dbReference>
<dbReference type="SMR" id="O20210"/>
<dbReference type="GO" id="GO:0009507">
    <property type="term" value="C:chloroplast"/>
    <property type="evidence" value="ECO:0007669"/>
    <property type="project" value="UniProtKB-SubCell"/>
</dbReference>
<dbReference type="GO" id="GO:0015935">
    <property type="term" value="C:small ribosomal subunit"/>
    <property type="evidence" value="ECO:0007669"/>
    <property type="project" value="InterPro"/>
</dbReference>
<dbReference type="GO" id="GO:0019843">
    <property type="term" value="F:rRNA binding"/>
    <property type="evidence" value="ECO:0007669"/>
    <property type="project" value="UniProtKB-KW"/>
</dbReference>
<dbReference type="GO" id="GO:0003735">
    <property type="term" value="F:structural constituent of ribosome"/>
    <property type="evidence" value="ECO:0007669"/>
    <property type="project" value="InterPro"/>
</dbReference>
<dbReference type="GO" id="GO:0042274">
    <property type="term" value="P:ribosomal small subunit biogenesis"/>
    <property type="evidence" value="ECO:0007669"/>
    <property type="project" value="TreeGrafter"/>
</dbReference>
<dbReference type="GO" id="GO:0006412">
    <property type="term" value="P:translation"/>
    <property type="evidence" value="ECO:0007669"/>
    <property type="project" value="InterPro"/>
</dbReference>
<dbReference type="CDD" id="cd00165">
    <property type="entry name" value="S4"/>
    <property type="match status" value="1"/>
</dbReference>
<dbReference type="FunFam" id="1.10.1050.10:FF:000002">
    <property type="entry name" value="30S ribosomal protein S4, chloroplastic"/>
    <property type="match status" value="1"/>
</dbReference>
<dbReference type="FunFam" id="3.10.290.10:FF:000081">
    <property type="entry name" value="30S ribosomal protein S4, chloroplastic"/>
    <property type="match status" value="1"/>
</dbReference>
<dbReference type="Gene3D" id="1.10.1050.10">
    <property type="entry name" value="Ribosomal Protein S4 Delta 41, Chain A, domain 1"/>
    <property type="match status" value="1"/>
</dbReference>
<dbReference type="Gene3D" id="3.10.290.10">
    <property type="entry name" value="RNA-binding S4 domain"/>
    <property type="match status" value="1"/>
</dbReference>
<dbReference type="HAMAP" id="MF_01306_B">
    <property type="entry name" value="Ribosomal_uS4_B"/>
    <property type="match status" value="1"/>
</dbReference>
<dbReference type="InterPro" id="IPR022801">
    <property type="entry name" value="Ribosomal_uS4"/>
</dbReference>
<dbReference type="InterPro" id="IPR005709">
    <property type="entry name" value="Ribosomal_uS4_bac-type"/>
</dbReference>
<dbReference type="InterPro" id="IPR018079">
    <property type="entry name" value="Ribosomal_uS4_CS"/>
</dbReference>
<dbReference type="InterPro" id="IPR001912">
    <property type="entry name" value="Ribosomal_uS4_N"/>
</dbReference>
<dbReference type="InterPro" id="IPR002942">
    <property type="entry name" value="S4_RNA-bd"/>
</dbReference>
<dbReference type="InterPro" id="IPR036986">
    <property type="entry name" value="S4_RNA-bd_sf"/>
</dbReference>
<dbReference type="NCBIfam" id="NF003717">
    <property type="entry name" value="PRK05327.1"/>
    <property type="match status" value="1"/>
</dbReference>
<dbReference type="NCBIfam" id="TIGR01017">
    <property type="entry name" value="rpsD_bact"/>
    <property type="match status" value="1"/>
</dbReference>
<dbReference type="PANTHER" id="PTHR11831">
    <property type="entry name" value="30S 40S RIBOSOMAL PROTEIN"/>
    <property type="match status" value="1"/>
</dbReference>
<dbReference type="PANTHER" id="PTHR11831:SF4">
    <property type="entry name" value="SMALL RIBOSOMAL SUBUNIT PROTEIN US4M"/>
    <property type="match status" value="1"/>
</dbReference>
<dbReference type="Pfam" id="PF00163">
    <property type="entry name" value="Ribosomal_S4"/>
    <property type="match status" value="1"/>
</dbReference>
<dbReference type="Pfam" id="PF01479">
    <property type="entry name" value="S4"/>
    <property type="match status" value="1"/>
</dbReference>
<dbReference type="SMART" id="SM01390">
    <property type="entry name" value="Ribosomal_S4"/>
    <property type="match status" value="1"/>
</dbReference>
<dbReference type="SMART" id="SM00363">
    <property type="entry name" value="S4"/>
    <property type="match status" value="1"/>
</dbReference>
<dbReference type="SUPFAM" id="SSF55174">
    <property type="entry name" value="Alpha-L RNA-binding motif"/>
    <property type="match status" value="1"/>
</dbReference>
<dbReference type="PROSITE" id="PS00632">
    <property type="entry name" value="RIBOSOMAL_S4"/>
    <property type="match status" value="1"/>
</dbReference>
<dbReference type="PROSITE" id="PS50889">
    <property type="entry name" value="S4"/>
    <property type="match status" value="1"/>
</dbReference>
<proteinExistence type="inferred from homology"/>
<evidence type="ECO:0000250" key="1"/>
<evidence type="ECO:0000256" key="2">
    <source>
        <dbReference type="SAM" id="MobiDB-lite"/>
    </source>
</evidence>
<evidence type="ECO:0000305" key="3"/>
<sequence length="182" mass="20822">RFKKIRRLGALPGLTSKRPGSGSDPKNKSRSGKRSQYRIRLEEKQKLRFHYGLTERQLLKYVHIAGKAKGSTGLVLLQLLEMRLDNILFRLGMASTIPGARQLVNHRHILVNGRIVDIPSYRCKPRDIITTKDKQRSKALIQNYIASSPHEELPNHLTIDPIQYKGLVNQIIDSKWIGLKIN</sequence>
<gene>
    <name type="primary">rps4</name>
</gene>